<accession>A9QQ26</accession>
<keyword id="KW-0020">Allergen</keyword>
<keyword id="KW-1015">Disulfide bond</keyword>
<keyword id="KW-0325">Glycoprotein</keyword>
<keyword id="KW-0964">Secreted</keyword>
<keyword id="KW-0732">Signal</keyword>
<proteinExistence type="evidence at transcript level"/>
<evidence type="ECO:0000250" key="1"/>
<evidence type="ECO:0000255" key="2"/>
<evidence type="ECO:0000305" key="3"/>
<protein>
    <recommendedName>
        <fullName>Venom allergen 5</fullName>
    </recommendedName>
    <alternativeName>
        <fullName>Antigen 5</fullName>
    </alternativeName>
</protein>
<organism>
    <name type="scientific">Lycosa singoriensis</name>
    <name type="common">Wolf spider</name>
    <name type="synonym">Aranea singoriensis</name>
    <dbReference type="NCBI Taxonomy" id="434756"/>
    <lineage>
        <taxon>Eukaryota</taxon>
        <taxon>Metazoa</taxon>
        <taxon>Ecdysozoa</taxon>
        <taxon>Arthropoda</taxon>
        <taxon>Chelicerata</taxon>
        <taxon>Arachnida</taxon>
        <taxon>Araneae</taxon>
        <taxon>Araneomorphae</taxon>
        <taxon>Entelegynae</taxon>
        <taxon>Lycosoidea</taxon>
        <taxon>Lycosidae</taxon>
        <taxon>Lycosa</taxon>
    </lineage>
</organism>
<sequence>MSAPVGIPSLLLALCALLCVLNAVRSAYCPDPYKRYSDQHSYCVGVCCSCAKYRRGVSPWLKKELVRLHNNLRSKVAGGKSHSVDHLPRATNMLEMVWDDELAEVAQRWSDKCERKSDCEDCRRVGRFGVGQIIFEFDGKMDGKDMENEFFSRFMALQSFRKEQVARFTAGTNPKTAQILWAKTWRIGCGFLDFNYPGNGRRYTQIVCNYGPKGNEEGEEVYKAGSVCSSCPANTCCGDACKKHNLKANYHGLCKVIDENLPPEGNVPHKKTGNEVFYCGFNDESDCRHTVEGVDRWIRNVTTGGTWLNTYLGNYGHTVIEVRSAHHLQVRQAMPGHQDPQWTHGGRTTLSVPAVRGFGGGRQILNLTHLPPCRR</sequence>
<name>VA5_LYCSI</name>
<dbReference type="EMBL" id="EU247109">
    <property type="protein sequence ID" value="ABX75373.1"/>
    <property type="molecule type" value="mRNA"/>
</dbReference>
<dbReference type="SMR" id="A9QQ26"/>
<dbReference type="ArachnoServer" id="AS000667">
    <property type="toxin name" value="CRISP-1-Lycosa singoriensis"/>
</dbReference>
<dbReference type="GO" id="GO:0005576">
    <property type="term" value="C:extracellular region"/>
    <property type="evidence" value="ECO:0007669"/>
    <property type="project" value="UniProtKB-SubCell"/>
</dbReference>
<dbReference type="CDD" id="cd05380">
    <property type="entry name" value="CAP_euk"/>
    <property type="match status" value="1"/>
</dbReference>
<dbReference type="Gene3D" id="3.40.33.10">
    <property type="entry name" value="CAP"/>
    <property type="match status" value="1"/>
</dbReference>
<dbReference type="InterPro" id="IPR014044">
    <property type="entry name" value="CAP_dom"/>
</dbReference>
<dbReference type="InterPro" id="IPR035940">
    <property type="entry name" value="CAP_sf"/>
</dbReference>
<dbReference type="InterPro" id="IPR001283">
    <property type="entry name" value="CRISP-related"/>
</dbReference>
<dbReference type="InterPro" id="IPR002413">
    <property type="entry name" value="V5_allergen-like"/>
</dbReference>
<dbReference type="PANTHER" id="PTHR10334">
    <property type="entry name" value="CYSTEINE-RICH SECRETORY PROTEIN-RELATED"/>
    <property type="match status" value="1"/>
</dbReference>
<dbReference type="Pfam" id="PF00188">
    <property type="entry name" value="CAP"/>
    <property type="match status" value="1"/>
</dbReference>
<dbReference type="PRINTS" id="PR00838">
    <property type="entry name" value="V5ALLERGEN"/>
</dbReference>
<dbReference type="PRINTS" id="PR00837">
    <property type="entry name" value="V5TPXLIKE"/>
</dbReference>
<dbReference type="SMART" id="SM00198">
    <property type="entry name" value="SCP"/>
    <property type="match status" value="1"/>
</dbReference>
<dbReference type="SUPFAM" id="SSF55797">
    <property type="entry name" value="PR-1-like"/>
    <property type="match status" value="1"/>
</dbReference>
<comment type="subcellular location">
    <subcellularLocation>
        <location evidence="1">Secreted</location>
    </subcellularLocation>
</comment>
<comment type="tissue specificity">
    <text>Expressed by the venom gland.</text>
</comment>
<comment type="PTM">
    <text evidence="3">Contains 9 disulfide bonds.</text>
</comment>
<comment type="allergen">
    <text evidence="1">Causes an allergic reaction in human.</text>
</comment>
<comment type="similarity">
    <text evidence="3">Belongs to the CRISP family. Venom allergen 5-like subfamily.</text>
</comment>
<reference key="1">
    <citation type="submission" date="2007-10" db="EMBL/GenBank/DDBJ databases">
        <title>Transcriptome analysis of the venom gland of the Chinese wolf spider Lycosa Singoriensis.</title>
        <authorList>
            <person name="Zhang Y."/>
            <person name="Liang S."/>
        </authorList>
    </citation>
    <scope>NUCLEOTIDE SEQUENCE [MRNA]</scope>
    <source>
        <tissue>Venom gland</tissue>
    </source>
</reference>
<feature type="signal peptide" evidence="2">
    <location>
        <begin position="1"/>
        <end position="26"/>
    </location>
</feature>
<feature type="chain" id="PRO_0000401917" description="Venom allergen 5">
    <location>
        <begin position="27"/>
        <end position="375"/>
    </location>
</feature>
<feature type="domain" description="SCP">
    <location>
        <begin position="66"/>
        <end position="210"/>
    </location>
</feature>
<feature type="glycosylation site" description="N-linked (GlcNAc...) asparagine" evidence="2">
    <location>
        <position position="300"/>
    </location>
</feature>
<feature type="glycosylation site" description="N-linked (GlcNAc...) asparagine" evidence="2">
    <location>
        <position position="366"/>
    </location>
</feature>